<organism>
    <name type="scientific">Schizosaccharomyces pombe (strain 972 / ATCC 24843)</name>
    <name type="common">Fission yeast</name>
    <dbReference type="NCBI Taxonomy" id="284812"/>
    <lineage>
        <taxon>Eukaryota</taxon>
        <taxon>Fungi</taxon>
        <taxon>Dikarya</taxon>
        <taxon>Ascomycota</taxon>
        <taxon>Taphrinomycotina</taxon>
        <taxon>Schizosaccharomycetes</taxon>
        <taxon>Schizosaccharomycetales</taxon>
        <taxon>Schizosaccharomycetaceae</taxon>
        <taxon>Schizosaccharomyces</taxon>
    </lineage>
</organism>
<gene>
    <name type="ORF">SPCC297.05</name>
</gene>
<protein>
    <recommendedName>
        <fullName>DENN domain-containing protein C297.05</fullName>
    </recommendedName>
</protein>
<comment type="subcellular location">
    <subcellularLocation>
        <location evidence="3">Cytoplasm</location>
    </subcellularLocation>
    <subcellularLocation>
        <location evidence="3">Nucleus</location>
    </subcellularLocation>
</comment>
<evidence type="ECO:0000255" key="1">
    <source>
        <dbReference type="PROSITE-ProRule" id="PRU00304"/>
    </source>
</evidence>
<evidence type="ECO:0000256" key="2">
    <source>
        <dbReference type="SAM" id="MobiDB-lite"/>
    </source>
</evidence>
<evidence type="ECO:0000269" key="3">
    <source>
    </source>
</evidence>
<evidence type="ECO:0000269" key="4">
    <source>
    </source>
</evidence>
<evidence type="ECO:0000305" key="5"/>
<evidence type="ECO:0000312" key="6">
    <source>
        <dbReference type="EMBL" id="CAB40785.1"/>
    </source>
</evidence>
<keyword id="KW-0963">Cytoplasm</keyword>
<keyword id="KW-0539">Nucleus</keyword>
<keyword id="KW-0597">Phosphoprotein</keyword>
<keyword id="KW-1185">Reference proteome</keyword>
<accession>Q9Y7Q7</accession>
<sequence>MESIADHFFLAGLSNGFVSVSNSQFRADRLDEDAISVSSSIIQNNTRKSPLKRVSITSESSFYKENTFAHHNTTGSNSVGPKKPFLDYHHSTSNTPTKKKKDSFDHASVTSLHRRSLSSNTSTPRKYHSRKPYSEPSVIDKEHLQNRVSIGTTHTQNDLYQSYVAYPDALPLFAATHPFERRYPPSLLHQFPSSKDIKNETPTIDRCDFPNYVPMFAFPNDITIKESDVRPVSTYHSFALTSDNNSHLYGICVVVWVAMPQSMQNDLEKECEVWRANNTTVEDREVAEKLLSSLETERSKLSSLLLKMQEKELEGSDSIDPILLEKIDVCEENIILYTELLRPMRYKLPRFVHGLTNNRTLWIPNAYGLLSKHSHLQSFCRDWLRIVCSSIQAEDLDFIPSSDLNSLKSLNLQSFVKNICCDVPLPPKGLLQLQVNVGPLNLYAFRSPVNEIPGWNDVDLYPLFRALSIPNILVLFEAALMEAKVIFLSENLGMLGYASQALLHLLYPLTWQGLYIPVLPRRLISCFEAPCSYIIGTLSYFFHMDDVPLDNIPLVVCDLDKNSVSTFGKIVRLSRSLRSKLQAHLKLAAPLHDKFYVPHSPPKYTMETYPNNVLSLSTVTCFPLREKFSIPALLSFRSSNFSKRPYVLSPILNGFLKLQDNPSSIYFAKQTDSRQSSASKLLYARLQAPEHARNFSSPPFTRPASPSSSKFRFSSSSFQSTIRRNSLTSPYSVPELRSSESNQNKAGSINTGSAVNLVSSKPGEQKVHIMYKEGHKLRRIYKMFPADSAGSICAVSGYALGDVHVQCDNCGLRVNLDFIKHISMPCVPACFNSQQILVTFLKFFIKILGSYRNYLRKPHMSRENFGISKGSGGLIGSFDFNKFTRQASKVHGSWISSLCSSQAFAEFIGDRCELDLNDPRVALFDQLLLCERNHGKPRLFGKATPFLRDKSLEIQRIEVAPIPASLKNDNALH</sequence>
<proteinExistence type="evidence at protein level"/>
<reference evidence="6" key="1">
    <citation type="journal article" date="2002" name="Nature">
        <title>The genome sequence of Schizosaccharomyces pombe.</title>
        <authorList>
            <person name="Wood V."/>
            <person name="Gwilliam R."/>
            <person name="Rajandream M.A."/>
            <person name="Lyne M.H."/>
            <person name="Lyne R."/>
            <person name="Stewart A."/>
            <person name="Sgouros J.G."/>
            <person name="Peat N."/>
            <person name="Hayles J."/>
            <person name="Baker S.G."/>
            <person name="Basham D."/>
            <person name="Bowman S."/>
            <person name="Brooks K."/>
            <person name="Brown D."/>
            <person name="Brown S."/>
            <person name="Chillingworth T."/>
            <person name="Churcher C.M."/>
            <person name="Collins M."/>
            <person name="Connor R."/>
            <person name="Cronin A."/>
            <person name="Davis P."/>
            <person name="Feltwell T."/>
            <person name="Fraser A."/>
            <person name="Gentles S."/>
            <person name="Goble A."/>
            <person name="Hamlin N."/>
            <person name="Harris D.E."/>
            <person name="Hidalgo J."/>
            <person name="Hodgson G."/>
            <person name="Holroyd S."/>
            <person name="Hornsby T."/>
            <person name="Howarth S."/>
            <person name="Huckle E.J."/>
            <person name="Hunt S."/>
            <person name="Jagels K."/>
            <person name="James K.D."/>
            <person name="Jones L."/>
            <person name="Jones M."/>
            <person name="Leather S."/>
            <person name="McDonald S."/>
            <person name="McLean J."/>
            <person name="Mooney P."/>
            <person name="Moule S."/>
            <person name="Mungall K.L."/>
            <person name="Murphy L.D."/>
            <person name="Niblett D."/>
            <person name="Odell C."/>
            <person name="Oliver K."/>
            <person name="O'Neil S."/>
            <person name="Pearson D."/>
            <person name="Quail M.A."/>
            <person name="Rabbinowitsch E."/>
            <person name="Rutherford K.M."/>
            <person name="Rutter S."/>
            <person name="Saunders D."/>
            <person name="Seeger K."/>
            <person name="Sharp S."/>
            <person name="Skelton J."/>
            <person name="Simmonds M.N."/>
            <person name="Squares R."/>
            <person name="Squares S."/>
            <person name="Stevens K."/>
            <person name="Taylor K."/>
            <person name="Taylor R.G."/>
            <person name="Tivey A."/>
            <person name="Walsh S.V."/>
            <person name="Warren T."/>
            <person name="Whitehead S."/>
            <person name="Woodward J.R."/>
            <person name="Volckaert G."/>
            <person name="Aert R."/>
            <person name="Robben J."/>
            <person name="Grymonprez B."/>
            <person name="Weltjens I."/>
            <person name="Vanstreels E."/>
            <person name="Rieger M."/>
            <person name="Schaefer M."/>
            <person name="Mueller-Auer S."/>
            <person name="Gabel C."/>
            <person name="Fuchs M."/>
            <person name="Duesterhoeft A."/>
            <person name="Fritzc C."/>
            <person name="Holzer E."/>
            <person name="Moestl D."/>
            <person name="Hilbert H."/>
            <person name="Borzym K."/>
            <person name="Langer I."/>
            <person name="Beck A."/>
            <person name="Lehrach H."/>
            <person name="Reinhardt R."/>
            <person name="Pohl T.M."/>
            <person name="Eger P."/>
            <person name="Zimmermann W."/>
            <person name="Wedler H."/>
            <person name="Wambutt R."/>
            <person name="Purnelle B."/>
            <person name="Goffeau A."/>
            <person name="Cadieu E."/>
            <person name="Dreano S."/>
            <person name="Gloux S."/>
            <person name="Lelaure V."/>
            <person name="Mottier S."/>
            <person name="Galibert F."/>
            <person name="Aves S.J."/>
            <person name="Xiang Z."/>
            <person name="Hunt C."/>
            <person name="Moore K."/>
            <person name="Hurst S.M."/>
            <person name="Lucas M."/>
            <person name="Rochet M."/>
            <person name="Gaillardin C."/>
            <person name="Tallada V.A."/>
            <person name="Garzon A."/>
            <person name="Thode G."/>
            <person name="Daga R.R."/>
            <person name="Cruzado L."/>
            <person name="Jimenez J."/>
            <person name="Sanchez M."/>
            <person name="del Rey F."/>
            <person name="Benito J."/>
            <person name="Dominguez A."/>
            <person name="Revuelta J.L."/>
            <person name="Moreno S."/>
            <person name="Armstrong J."/>
            <person name="Forsburg S.L."/>
            <person name="Cerutti L."/>
            <person name="Lowe T."/>
            <person name="McCombie W.R."/>
            <person name="Paulsen I."/>
            <person name="Potashkin J."/>
            <person name="Shpakovski G.V."/>
            <person name="Ussery D."/>
            <person name="Barrell B.G."/>
            <person name="Nurse P."/>
        </authorList>
    </citation>
    <scope>NUCLEOTIDE SEQUENCE [LARGE SCALE GENOMIC DNA]</scope>
    <source>
        <strain>972 / ATCC 24843</strain>
    </source>
</reference>
<reference evidence="5" key="2">
    <citation type="journal article" date="2006" name="Nat. Biotechnol.">
        <title>ORFeome cloning and global analysis of protein localization in the fission yeast Schizosaccharomyces pombe.</title>
        <authorList>
            <person name="Matsuyama A."/>
            <person name="Arai R."/>
            <person name="Yashiroda Y."/>
            <person name="Shirai A."/>
            <person name="Kamata A."/>
            <person name="Sekido S."/>
            <person name="Kobayashi Y."/>
            <person name="Hashimoto A."/>
            <person name="Hamamoto M."/>
            <person name="Hiraoka Y."/>
            <person name="Horinouchi S."/>
            <person name="Yoshida M."/>
        </authorList>
    </citation>
    <scope>SUBCELLULAR LOCATION [LARGE SCALE ANALYSIS]</scope>
</reference>
<reference key="3">
    <citation type="journal article" date="2008" name="J. Proteome Res.">
        <title>Phosphoproteome analysis of fission yeast.</title>
        <authorList>
            <person name="Wilson-Grady J.T."/>
            <person name="Villen J."/>
            <person name="Gygi S.P."/>
        </authorList>
    </citation>
    <scope>PHOSPHORYLATION [LARGE SCALE ANALYSIS] AT SER-134; SER-318 AND SER-726</scope>
    <scope>IDENTIFICATION BY MASS SPECTROMETRY</scope>
</reference>
<dbReference type="EMBL" id="CU329672">
    <property type="protein sequence ID" value="CAB40785.1"/>
    <property type="molecule type" value="Genomic_DNA"/>
</dbReference>
<dbReference type="PIR" id="T41272">
    <property type="entry name" value="T41272"/>
</dbReference>
<dbReference type="RefSeq" id="NP_588362.1">
    <property type="nucleotide sequence ID" value="NM_001023353.2"/>
</dbReference>
<dbReference type="BioGRID" id="275790">
    <property type="interactions" value="5"/>
</dbReference>
<dbReference type="FunCoup" id="Q9Y7Q7">
    <property type="interactions" value="5"/>
</dbReference>
<dbReference type="STRING" id="284812.Q9Y7Q7"/>
<dbReference type="iPTMnet" id="Q9Y7Q7"/>
<dbReference type="PaxDb" id="4896-SPCC297.05.1"/>
<dbReference type="EnsemblFungi" id="SPCC297.05.1">
    <property type="protein sequence ID" value="SPCC297.05.1:pep"/>
    <property type="gene ID" value="SPCC297.05"/>
</dbReference>
<dbReference type="KEGG" id="spo:2539220"/>
<dbReference type="PomBase" id="SPCC297.05"/>
<dbReference type="VEuPathDB" id="FungiDB:SPCC297.05"/>
<dbReference type="eggNOG" id="ENOG502QQUM">
    <property type="taxonomic scope" value="Eukaryota"/>
</dbReference>
<dbReference type="HOGENOM" id="CLU_001932_0_0_1"/>
<dbReference type="InParanoid" id="Q9Y7Q7"/>
<dbReference type="OMA" id="RCEEWRK"/>
<dbReference type="PhylomeDB" id="Q9Y7Q7"/>
<dbReference type="Reactome" id="R-SPO-8876198">
    <property type="pathway name" value="RAB GEFs exchange GTP for GDP on RABs"/>
</dbReference>
<dbReference type="PRO" id="PR:Q9Y7Q7"/>
<dbReference type="Proteomes" id="UP000002485">
    <property type="component" value="Chromosome III"/>
</dbReference>
<dbReference type="GO" id="GO:0031410">
    <property type="term" value="C:cytoplasmic vesicle"/>
    <property type="evidence" value="ECO:0000318"/>
    <property type="project" value="GO_Central"/>
</dbReference>
<dbReference type="GO" id="GO:0005829">
    <property type="term" value="C:cytosol"/>
    <property type="evidence" value="ECO:0007005"/>
    <property type="project" value="PomBase"/>
</dbReference>
<dbReference type="GO" id="GO:0005634">
    <property type="term" value="C:nucleus"/>
    <property type="evidence" value="ECO:0007005"/>
    <property type="project" value="PomBase"/>
</dbReference>
<dbReference type="GO" id="GO:0019992">
    <property type="term" value="F:diacylglycerol binding"/>
    <property type="evidence" value="ECO:0000255"/>
    <property type="project" value="PomBase"/>
</dbReference>
<dbReference type="GO" id="GO:0005085">
    <property type="term" value="F:guanyl-nucleotide exchange factor activity"/>
    <property type="evidence" value="ECO:0000266"/>
    <property type="project" value="PomBase"/>
</dbReference>
<dbReference type="GO" id="GO:0032483">
    <property type="term" value="P:regulation of Rab protein signal transduction"/>
    <property type="evidence" value="ECO:0000318"/>
    <property type="project" value="GO_Central"/>
</dbReference>
<dbReference type="GO" id="GO:0016192">
    <property type="term" value="P:vesicle-mediated transport"/>
    <property type="evidence" value="ECO:0000250"/>
    <property type="project" value="PomBase"/>
</dbReference>
<dbReference type="Gene3D" id="3.30.450.200">
    <property type="match status" value="1"/>
</dbReference>
<dbReference type="Gene3D" id="3.40.50.11500">
    <property type="match status" value="1"/>
</dbReference>
<dbReference type="InterPro" id="IPR001194">
    <property type="entry name" value="cDENN_dom"/>
</dbReference>
<dbReference type="InterPro" id="IPR005112">
    <property type="entry name" value="dDENN_dom"/>
</dbReference>
<dbReference type="InterPro" id="IPR043153">
    <property type="entry name" value="DENN_C"/>
</dbReference>
<dbReference type="InterPro" id="IPR051696">
    <property type="entry name" value="DENN_Domain_GEFs"/>
</dbReference>
<dbReference type="InterPro" id="IPR037516">
    <property type="entry name" value="Tripartite_DENN"/>
</dbReference>
<dbReference type="InterPro" id="IPR005113">
    <property type="entry name" value="uDENN_dom"/>
</dbReference>
<dbReference type="PANTHER" id="PTHR12296:SF21">
    <property type="entry name" value="DENN DOMAIN-CONTAINING PROTEIN 3"/>
    <property type="match status" value="1"/>
</dbReference>
<dbReference type="PANTHER" id="PTHR12296">
    <property type="entry name" value="DENN DOMAIN-CONTAINING PROTEIN 4"/>
    <property type="match status" value="1"/>
</dbReference>
<dbReference type="Pfam" id="PF03455">
    <property type="entry name" value="dDENN"/>
    <property type="match status" value="1"/>
</dbReference>
<dbReference type="Pfam" id="PF02141">
    <property type="entry name" value="DENN"/>
    <property type="match status" value="1"/>
</dbReference>
<dbReference type="Pfam" id="PF03456">
    <property type="entry name" value="uDENN"/>
    <property type="match status" value="1"/>
</dbReference>
<dbReference type="SMART" id="SM00801">
    <property type="entry name" value="dDENN"/>
    <property type="match status" value="1"/>
</dbReference>
<dbReference type="SMART" id="SM00799">
    <property type="entry name" value="DENN"/>
    <property type="match status" value="1"/>
</dbReference>
<dbReference type="SMART" id="SM00800">
    <property type="entry name" value="uDENN"/>
    <property type="match status" value="1"/>
</dbReference>
<dbReference type="PROSITE" id="PS50211">
    <property type="entry name" value="DENN"/>
    <property type="match status" value="1"/>
</dbReference>
<feature type="chain" id="PRO_0000316866" description="DENN domain-containing protein C297.05">
    <location>
        <begin position="1"/>
        <end position="973"/>
    </location>
</feature>
<feature type="domain" description="uDENN" evidence="1">
    <location>
        <begin position="169"/>
        <end position="427"/>
    </location>
</feature>
<feature type="domain" description="cDENN" evidence="1">
    <location>
        <begin position="449"/>
        <end position="586"/>
    </location>
</feature>
<feature type="domain" description="dDENN" evidence="1">
    <location>
        <begin position="588"/>
        <end position="919"/>
    </location>
</feature>
<feature type="region of interest" description="Disordered" evidence="2">
    <location>
        <begin position="69"/>
        <end position="136"/>
    </location>
</feature>
<feature type="region of interest" description="Disordered" evidence="2">
    <location>
        <begin position="693"/>
        <end position="713"/>
    </location>
</feature>
<feature type="region of interest" description="Disordered" evidence="2">
    <location>
        <begin position="729"/>
        <end position="750"/>
    </location>
</feature>
<feature type="compositionally biased region" description="Polar residues" evidence="2">
    <location>
        <begin position="69"/>
        <end position="79"/>
    </location>
</feature>
<feature type="compositionally biased region" description="Polar residues" evidence="2">
    <location>
        <begin position="739"/>
        <end position="750"/>
    </location>
</feature>
<feature type="modified residue" description="Phosphoserine" evidence="4">
    <location>
        <position position="134"/>
    </location>
</feature>
<feature type="modified residue" description="Phosphoserine" evidence="4">
    <location>
        <position position="318"/>
    </location>
</feature>
<feature type="modified residue" description="Phosphoserine" evidence="4">
    <location>
        <position position="726"/>
    </location>
</feature>
<name>DENN_SCHPO</name>